<gene>
    <name evidence="1" type="primary">rpsO</name>
    <name type="ordered locus">BQ01990</name>
</gene>
<organism>
    <name type="scientific">Bartonella quintana (strain Toulouse)</name>
    <name type="common">Rochalimaea quintana</name>
    <dbReference type="NCBI Taxonomy" id="283165"/>
    <lineage>
        <taxon>Bacteria</taxon>
        <taxon>Pseudomonadati</taxon>
        <taxon>Pseudomonadota</taxon>
        <taxon>Alphaproteobacteria</taxon>
        <taxon>Hyphomicrobiales</taxon>
        <taxon>Bartonellaceae</taxon>
        <taxon>Bartonella</taxon>
    </lineage>
</organism>
<evidence type="ECO:0000255" key="1">
    <source>
        <dbReference type="HAMAP-Rule" id="MF_01343"/>
    </source>
</evidence>
<evidence type="ECO:0000305" key="2"/>
<accession>Q6G0P6</accession>
<reference key="1">
    <citation type="journal article" date="2004" name="Proc. Natl. Acad. Sci. U.S.A.">
        <title>The louse-borne human pathogen Bartonella quintana is a genomic derivative of the zoonotic agent Bartonella henselae.</title>
        <authorList>
            <person name="Alsmark U.C.M."/>
            <person name="Frank A.C."/>
            <person name="Karlberg E.O."/>
            <person name="Legault B.-A."/>
            <person name="Ardell D.H."/>
            <person name="Canbaeck B."/>
            <person name="Eriksson A.-S."/>
            <person name="Naeslund A.K."/>
            <person name="Handley S.A."/>
            <person name="Huvet M."/>
            <person name="La Scola B."/>
            <person name="Holmberg M."/>
            <person name="Andersson S.G.E."/>
        </authorList>
    </citation>
    <scope>NUCLEOTIDE SEQUENCE [LARGE SCALE GENOMIC DNA]</scope>
    <source>
        <strain>Toulouse</strain>
    </source>
</reference>
<proteinExistence type="inferred from homology"/>
<sequence length="89" mass="10403">MSITAERKQALVAEYANKAGDTGSPEVQIAVLSERISNLTNHFKFHKKDNHSRRGLLKMVSQRRRLLDYLKEIDQNRYHTLIKKLGLRR</sequence>
<name>RS15_BARQU</name>
<protein>
    <recommendedName>
        <fullName evidence="1">Small ribosomal subunit protein uS15</fullName>
    </recommendedName>
    <alternativeName>
        <fullName evidence="2">30S ribosomal protein S15</fullName>
    </alternativeName>
</protein>
<keyword id="KW-0687">Ribonucleoprotein</keyword>
<keyword id="KW-0689">Ribosomal protein</keyword>
<keyword id="KW-0694">RNA-binding</keyword>
<keyword id="KW-0699">rRNA-binding</keyword>
<dbReference type="EMBL" id="BX897700">
    <property type="protein sequence ID" value="CAF25702.1"/>
    <property type="molecule type" value="Genomic_DNA"/>
</dbReference>
<dbReference type="RefSeq" id="WP_011179017.1">
    <property type="nucleotide sequence ID" value="NC_005955.1"/>
</dbReference>
<dbReference type="SMR" id="Q6G0P6"/>
<dbReference type="KEGG" id="bqu:BQ01990"/>
<dbReference type="eggNOG" id="COG0184">
    <property type="taxonomic scope" value="Bacteria"/>
</dbReference>
<dbReference type="HOGENOM" id="CLU_148518_0_0_5"/>
<dbReference type="OrthoDB" id="9799262at2"/>
<dbReference type="Proteomes" id="UP000000597">
    <property type="component" value="Chromosome"/>
</dbReference>
<dbReference type="GO" id="GO:0022627">
    <property type="term" value="C:cytosolic small ribosomal subunit"/>
    <property type="evidence" value="ECO:0007669"/>
    <property type="project" value="TreeGrafter"/>
</dbReference>
<dbReference type="GO" id="GO:0019843">
    <property type="term" value="F:rRNA binding"/>
    <property type="evidence" value="ECO:0007669"/>
    <property type="project" value="UniProtKB-UniRule"/>
</dbReference>
<dbReference type="GO" id="GO:0003735">
    <property type="term" value="F:structural constituent of ribosome"/>
    <property type="evidence" value="ECO:0007669"/>
    <property type="project" value="InterPro"/>
</dbReference>
<dbReference type="GO" id="GO:0006412">
    <property type="term" value="P:translation"/>
    <property type="evidence" value="ECO:0007669"/>
    <property type="project" value="UniProtKB-UniRule"/>
</dbReference>
<dbReference type="CDD" id="cd00353">
    <property type="entry name" value="Ribosomal_S15p_S13e"/>
    <property type="match status" value="1"/>
</dbReference>
<dbReference type="FunFam" id="1.10.287.10:FF:000002">
    <property type="entry name" value="30S ribosomal protein S15"/>
    <property type="match status" value="1"/>
</dbReference>
<dbReference type="Gene3D" id="6.10.250.3130">
    <property type="match status" value="1"/>
</dbReference>
<dbReference type="Gene3D" id="1.10.287.10">
    <property type="entry name" value="S15/NS1, RNA-binding"/>
    <property type="match status" value="1"/>
</dbReference>
<dbReference type="HAMAP" id="MF_01343_B">
    <property type="entry name" value="Ribosomal_uS15_B"/>
    <property type="match status" value="1"/>
</dbReference>
<dbReference type="InterPro" id="IPR000589">
    <property type="entry name" value="Ribosomal_uS15"/>
</dbReference>
<dbReference type="InterPro" id="IPR005290">
    <property type="entry name" value="Ribosomal_uS15_bac-type"/>
</dbReference>
<dbReference type="InterPro" id="IPR009068">
    <property type="entry name" value="uS15_NS1_RNA-bd_sf"/>
</dbReference>
<dbReference type="NCBIfam" id="TIGR00952">
    <property type="entry name" value="S15_bact"/>
    <property type="match status" value="1"/>
</dbReference>
<dbReference type="PANTHER" id="PTHR23321">
    <property type="entry name" value="RIBOSOMAL PROTEIN S15, BACTERIAL AND ORGANELLAR"/>
    <property type="match status" value="1"/>
</dbReference>
<dbReference type="PANTHER" id="PTHR23321:SF26">
    <property type="entry name" value="SMALL RIBOSOMAL SUBUNIT PROTEIN US15M"/>
    <property type="match status" value="1"/>
</dbReference>
<dbReference type="Pfam" id="PF00312">
    <property type="entry name" value="Ribosomal_S15"/>
    <property type="match status" value="1"/>
</dbReference>
<dbReference type="SMART" id="SM01387">
    <property type="entry name" value="Ribosomal_S15"/>
    <property type="match status" value="1"/>
</dbReference>
<dbReference type="SUPFAM" id="SSF47060">
    <property type="entry name" value="S15/NS1 RNA-binding domain"/>
    <property type="match status" value="1"/>
</dbReference>
<dbReference type="PROSITE" id="PS00362">
    <property type="entry name" value="RIBOSOMAL_S15"/>
    <property type="match status" value="1"/>
</dbReference>
<comment type="function">
    <text evidence="1">One of the primary rRNA binding proteins, it binds directly to 16S rRNA where it helps nucleate assembly of the platform of the 30S subunit by binding and bridging several RNA helices of the 16S rRNA.</text>
</comment>
<comment type="function">
    <text evidence="1">Forms an intersubunit bridge (bridge B4) with the 23S rRNA of the 50S subunit in the ribosome.</text>
</comment>
<comment type="subunit">
    <text evidence="1">Part of the 30S ribosomal subunit. Forms a bridge to the 50S subunit in the 70S ribosome, contacting the 23S rRNA.</text>
</comment>
<comment type="similarity">
    <text evidence="1">Belongs to the universal ribosomal protein uS15 family.</text>
</comment>
<feature type="chain" id="PRO_0000115387" description="Small ribosomal subunit protein uS15">
    <location>
        <begin position="1"/>
        <end position="89"/>
    </location>
</feature>